<protein>
    <recommendedName>
        <fullName>Probable Xaa-Pro aminopeptidase BC1G_13431</fullName>
        <ecNumber>3.4.11.9</ecNumber>
    </recommendedName>
    <alternativeName>
        <fullName>Aminoacylproline aminopeptidase</fullName>
    </alternativeName>
    <alternativeName>
        <fullName>Prolidase</fullName>
    </alternativeName>
</protein>
<feature type="chain" id="PRO_0000411830" description="Probable Xaa-Pro aminopeptidase BC1G_13431">
    <location>
        <begin position="1"/>
        <end position="555"/>
    </location>
</feature>
<feature type="region of interest" description="Disordered" evidence="2">
    <location>
        <begin position="527"/>
        <end position="555"/>
    </location>
</feature>
<feature type="compositionally biased region" description="Basic and acidic residues" evidence="2">
    <location>
        <begin position="538"/>
        <end position="547"/>
    </location>
</feature>
<feature type="binding site" evidence="1">
    <location>
        <position position="303"/>
    </location>
    <ligand>
        <name>Mn(2+)</name>
        <dbReference type="ChEBI" id="CHEBI:29035"/>
        <label>2</label>
    </ligand>
</feature>
<feature type="binding site" evidence="1">
    <location>
        <position position="314"/>
    </location>
    <ligand>
        <name>Mn(2+)</name>
        <dbReference type="ChEBI" id="CHEBI:29035"/>
        <label>1</label>
    </ligand>
</feature>
<feature type="binding site" evidence="1">
    <location>
        <position position="314"/>
    </location>
    <ligand>
        <name>Mn(2+)</name>
        <dbReference type="ChEBI" id="CHEBI:29035"/>
        <label>2</label>
    </ligand>
</feature>
<feature type="binding site" evidence="1">
    <location>
        <position position="458"/>
    </location>
    <ligand>
        <name>Mn(2+)</name>
        <dbReference type="ChEBI" id="CHEBI:29035"/>
        <label>1</label>
    </ligand>
</feature>
<feature type="binding site" evidence="1">
    <location>
        <position position="499"/>
    </location>
    <ligand>
        <name>Mn(2+)</name>
        <dbReference type="ChEBI" id="CHEBI:29035"/>
        <label>1</label>
    </ligand>
</feature>
<feature type="binding site" evidence="1">
    <location>
        <position position="499"/>
    </location>
    <ligand>
        <name>Mn(2+)</name>
        <dbReference type="ChEBI" id="CHEBI:29035"/>
        <label>2</label>
    </ligand>
</feature>
<gene>
    <name type="ORF">BC1G_13431</name>
    <name type="ORF">BCIN_10g03210</name>
</gene>
<reference key="1">
    <citation type="journal article" date="2011" name="PLoS Genet.">
        <title>Genomic analysis of the necrotrophic fungal pathogens Sclerotinia sclerotiorum and Botrytis cinerea.</title>
        <authorList>
            <person name="Amselem J."/>
            <person name="Cuomo C.A."/>
            <person name="van Kan J.A.L."/>
            <person name="Viaud M."/>
            <person name="Benito E.P."/>
            <person name="Couloux A."/>
            <person name="Coutinho P.M."/>
            <person name="de Vries R.P."/>
            <person name="Dyer P.S."/>
            <person name="Fillinger S."/>
            <person name="Fournier E."/>
            <person name="Gout L."/>
            <person name="Hahn M."/>
            <person name="Kohn L."/>
            <person name="Lapalu N."/>
            <person name="Plummer K.M."/>
            <person name="Pradier J.-M."/>
            <person name="Quevillon E."/>
            <person name="Sharon A."/>
            <person name="Simon A."/>
            <person name="ten Have A."/>
            <person name="Tudzynski B."/>
            <person name="Tudzynski P."/>
            <person name="Wincker P."/>
            <person name="Andrew M."/>
            <person name="Anthouard V."/>
            <person name="Beever R.E."/>
            <person name="Beffa R."/>
            <person name="Benoit I."/>
            <person name="Bouzid O."/>
            <person name="Brault B."/>
            <person name="Chen Z."/>
            <person name="Choquer M."/>
            <person name="Collemare J."/>
            <person name="Cotton P."/>
            <person name="Danchin E.G."/>
            <person name="Da Silva C."/>
            <person name="Gautier A."/>
            <person name="Giraud C."/>
            <person name="Giraud T."/>
            <person name="Gonzalez C."/>
            <person name="Grossetete S."/>
            <person name="Gueldener U."/>
            <person name="Henrissat B."/>
            <person name="Howlett B.J."/>
            <person name="Kodira C."/>
            <person name="Kretschmer M."/>
            <person name="Lappartient A."/>
            <person name="Leroch M."/>
            <person name="Levis C."/>
            <person name="Mauceli E."/>
            <person name="Neuveglise C."/>
            <person name="Oeser B."/>
            <person name="Pearson M."/>
            <person name="Poulain J."/>
            <person name="Poussereau N."/>
            <person name="Quesneville H."/>
            <person name="Rascle C."/>
            <person name="Schumacher J."/>
            <person name="Segurens B."/>
            <person name="Sexton A."/>
            <person name="Silva E."/>
            <person name="Sirven C."/>
            <person name="Soanes D.M."/>
            <person name="Talbot N.J."/>
            <person name="Templeton M."/>
            <person name="Yandava C."/>
            <person name="Yarden O."/>
            <person name="Zeng Q."/>
            <person name="Rollins J.A."/>
            <person name="Lebrun M.-H."/>
            <person name="Dickman M."/>
        </authorList>
    </citation>
    <scope>NUCLEOTIDE SEQUENCE [LARGE SCALE GENOMIC DNA]</scope>
    <source>
        <strain>B05.10</strain>
    </source>
</reference>
<reference key="2">
    <citation type="journal article" date="2012" name="Eukaryot. Cell">
        <title>Genome update of Botrytis cinerea strains B05.10 and T4.</title>
        <authorList>
            <person name="Staats M."/>
            <person name="van Kan J.A.L."/>
        </authorList>
    </citation>
    <scope>NUCLEOTIDE SEQUENCE [LARGE SCALE GENOMIC DNA]</scope>
    <scope>GENOME REANNOTATION</scope>
    <source>
        <strain>B05.10</strain>
    </source>
</reference>
<reference key="3">
    <citation type="journal article" date="2017" name="Mol. Plant Pathol.">
        <title>A gapless genome sequence of the fungus Botrytis cinerea.</title>
        <authorList>
            <person name="van Kan J.A.L."/>
            <person name="Stassen J.H.M."/>
            <person name="Mosbach A."/>
            <person name="van der Lee T.A.J."/>
            <person name="Faino L."/>
            <person name="Farmer A.D."/>
            <person name="Papasotiriou D.G."/>
            <person name="Zhou S."/>
            <person name="Seidl M.F."/>
            <person name="Cottam E."/>
            <person name="Edel D."/>
            <person name="Hahn M."/>
            <person name="Schwartz D.C."/>
            <person name="Dietrich R.A."/>
            <person name="Widdison S."/>
            <person name="Scalliet G."/>
        </authorList>
    </citation>
    <scope>NUCLEOTIDE SEQUENCE [LARGE SCALE GENOMIC DNA]</scope>
    <scope>GENOME REANNOTATION</scope>
    <source>
        <strain>B05.10</strain>
    </source>
</reference>
<proteinExistence type="inferred from homology"/>
<evidence type="ECO:0000250" key="1"/>
<evidence type="ECO:0000256" key="2">
    <source>
        <dbReference type="SAM" id="MobiDB-lite"/>
    </source>
</evidence>
<evidence type="ECO:0000305" key="3"/>
<dbReference type="EC" id="3.4.11.9"/>
<dbReference type="EMBL" id="CP009814">
    <property type="protein sequence ID" value="ATZ54311.1"/>
    <property type="molecule type" value="Genomic_DNA"/>
</dbReference>
<dbReference type="RefSeq" id="XP_001548054.1">
    <property type="nucleotide sequence ID" value="XM_001548004.1"/>
</dbReference>
<dbReference type="SMR" id="A6SL16"/>
<dbReference type="EnsemblFungi" id="Bcin10g03210.1">
    <property type="protein sequence ID" value="Bcin10p03210.1"/>
    <property type="gene ID" value="Bcin10g03210"/>
</dbReference>
<dbReference type="GeneID" id="5428547"/>
<dbReference type="KEGG" id="bfu:BCIN_10g03210"/>
<dbReference type="VEuPathDB" id="FungiDB:Bcin10g03210"/>
<dbReference type="OrthoDB" id="10261878at2759"/>
<dbReference type="Proteomes" id="UP000001798">
    <property type="component" value="Chromosome bcin10"/>
</dbReference>
<dbReference type="GO" id="GO:0030145">
    <property type="term" value="F:manganese ion binding"/>
    <property type="evidence" value="ECO:0007669"/>
    <property type="project" value="InterPro"/>
</dbReference>
<dbReference type="GO" id="GO:0070006">
    <property type="term" value="F:metalloaminopeptidase activity"/>
    <property type="evidence" value="ECO:0007669"/>
    <property type="project" value="InterPro"/>
</dbReference>
<dbReference type="GO" id="GO:0006508">
    <property type="term" value="P:proteolysis"/>
    <property type="evidence" value="ECO:0007669"/>
    <property type="project" value="UniProtKB-KW"/>
</dbReference>
<dbReference type="CDD" id="cd01087">
    <property type="entry name" value="Prolidase"/>
    <property type="match status" value="1"/>
</dbReference>
<dbReference type="Gene3D" id="3.90.230.10">
    <property type="entry name" value="Creatinase/methionine aminopeptidase superfamily"/>
    <property type="match status" value="1"/>
</dbReference>
<dbReference type="Gene3D" id="3.40.350.10">
    <property type="entry name" value="Creatinase/prolidase N-terminal domain"/>
    <property type="match status" value="1"/>
</dbReference>
<dbReference type="InterPro" id="IPR007865">
    <property type="entry name" value="Aminopep_P_N"/>
</dbReference>
<dbReference type="InterPro" id="IPR029149">
    <property type="entry name" value="Creatin/AminoP/Spt16_N"/>
</dbReference>
<dbReference type="InterPro" id="IPR036005">
    <property type="entry name" value="Creatinase/aminopeptidase-like"/>
</dbReference>
<dbReference type="InterPro" id="IPR000994">
    <property type="entry name" value="Pept_M24"/>
</dbReference>
<dbReference type="InterPro" id="IPR001131">
    <property type="entry name" value="Peptidase_M24B_aminopep-P_CS"/>
</dbReference>
<dbReference type="InterPro" id="IPR052433">
    <property type="entry name" value="X-Pro_dipept-like"/>
</dbReference>
<dbReference type="PANTHER" id="PTHR43226">
    <property type="entry name" value="XAA-PRO AMINOPEPTIDASE 3"/>
    <property type="match status" value="1"/>
</dbReference>
<dbReference type="PANTHER" id="PTHR43226:SF3">
    <property type="entry name" value="XAA-PRO AMINOPEPTIDASE AN0832-RELATED"/>
    <property type="match status" value="1"/>
</dbReference>
<dbReference type="Pfam" id="PF05195">
    <property type="entry name" value="AMP_N"/>
    <property type="match status" value="1"/>
</dbReference>
<dbReference type="Pfam" id="PF00557">
    <property type="entry name" value="Peptidase_M24"/>
    <property type="match status" value="1"/>
</dbReference>
<dbReference type="SMART" id="SM01011">
    <property type="entry name" value="AMP_N"/>
    <property type="match status" value="1"/>
</dbReference>
<dbReference type="SUPFAM" id="SSF55920">
    <property type="entry name" value="Creatinase/aminopeptidase"/>
    <property type="match status" value="1"/>
</dbReference>
<dbReference type="SUPFAM" id="SSF53092">
    <property type="entry name" value="Creatinase/prolidase N-terminal domain"/>
    <property type="match status" value="1"/>
</dbReference>
<dbReference type="PROSITE" id="PS00491">
    <property type="entry name" value="PROLINE_PEPTIDASE"/>
    <property type="match status" value="1"/>
</dbReference>
<organism>
    <name type="scientific">Botryotinia fuckeliana (strain B05.10)</name>
    <name type="common">Noble rot fungus</name>
    <name type="synonym">Botrytis cinerea</name>
    <dbReference type="NCBI Taxonomy" id="332648"/>
    <lineage>
        <taxon>Eukaryota</taxon>
        <taxon>Fungi</taxon>
        <taxon>Dikarya</taxon>
        <taxon>Ascomycota</taxon>
        <taxon>Pezizomycotina</taxon>
        <taxon>Leotiomycetes</taxon>
        <taxon>Helotiales</taxon>
        <taxon>Sclerotiniaceae</taxon>
        <taxon>Botrytis</taxon>
    </lineage>
</organism>
<keyword id="KW-0031">Aminopeptidase</keyword>
<keyword id="KW-0378">Hydrolase</keyword>
<keyword id="KW-0464">Manganese</keyword>
<keyword id="KW-0479">Metal-binding</keyword>
<keyword id="KW-0482">Metalloprotease</keyword>
<keyword id="KW-0645">Protease</keyword>
<keyword id="KW-1185">Reference proteome</keyword>
<comment type="function">
    <text evidence="1">Catalyzes the removal of a penultimate prolyl residue from the N-termini of peptides.</text>
</comment>
<comment type="catalytic activity">
    <reaction>
        <text>Release of any N-terminal amino acid, including proline, that is linked to proline, even from a dipeptide or tripeptide.</text>
        <dbReference type="EC" id="3.4.11.9"/>
    </reaction>
</comment>
<comment type="cofactor">
    <cofactor evidence="1">
        <name>Mn(2+)</name>
        <dbReference type="ChEBI" id="CHEBI:29035"/>
    </cofactor>
    <text evidence="1">Binds 2 manganese ions per subunit.</text>
</comment>
<comment type="similarity">
    <text evidence="3">Belongs to the peptidase M24B family.</text>
</comment>
<sequence>MNIQTIMSSFTAQDKDQEVRPSSSGSWACKEVDEFDALSIEYKPKPTEKYPAKLHARNVRKYLDVGEGLIYLPGLPSFNYEDSDMPPAFRQRRYFYYITGVNLSDCIVTYNIHRDQLWLWIPPPNSGRSVIYNGARPTIKEIMSKYDFDHVETLTHLDSYLTWYAHTEPGKIHVLHDYQAPKNIELQITRKNGCHSIISESPFDSSKLEEAMNTARAIKSPYELRMIRKASAITAQGHLNVLRGLRHLSNEAEIEAIFTATCIAKQAKTQAYGVIAGSGENASTLHYMANNEPLKGRQLLCLDAGCEWDCYASDVTRTVPISGEYTEEAEAIYDIVAKMQDECIELLKPGANYRDIHIHAHKVALKGLMDLGLVEGGTFDELFMAGVSVAFFPHGLGHYVGLEVHDVGPGGSRITNRLYGFDKKPADWTDAYFQILSNTGVTSDGGSILEKDMVVTVEPGIYFSRYALEEVYLKSPNYAKYINKDLLQKYYPVGGVRIEDDLLITEDGYENLTTVLKGKEALKIINEGKEQEEEEEREANRKATESRKQKKTWFW</sequence>
<name>AMPP2_BOTFB</name>
<accession>A6SL16</accession>
<accession>A0A384JUX0</accession>